<feature type="chain" id="PRO_0000085650" description="Serine/threonine-protein kinase ATG1">
    <location>
        <begin position="1"/>
        <end position="804"/>
    </location>
</feature>
<feature type="domain" description="Protein kinase" evidence="2">
    <location>
        <begin position="12"/>
        <end position="308"/>
    </location>
</feature>
<feature type="region of interest" description="Disordered" evidence="4">
    <location>
        <begin position="339"/>
        <end position="364"/>
    </location>
</feature>
<feature type="region of interest" description="Disordered" evidence="4">
    <location>
        <begin position="395"/>
        <end position="415"/>
    </location>
</feature>
<feature type="region of interest" description="Disordered" evidence="4">
    <location>
        <begin position="455"/>
        <end position="506"/>
    </location>
</feature>
<feature type="compositionally biased region" description="Basic and acidic residues" evidence="4">
    <location>
        <begin position="404"/>
        <end position="415"/>
    </location>
</feature>
<feature type="compositionally biased region" description="Polar residues" evidence="4">
    <location>
        <begin position="462"/>
        <end position="495"/>
    </location>
</feature>
<feature type="active site" description="Proton acceptor" evidence="2 3">
    <location>
        <position position="158"/>
    </location>
</feature>
<feature type="binding site" evidence="2">
    <location>
        <begin position="18"/>
        <end position="26"/>
    </location>
    <ligand>
        <name>ATP</name>
        <dbReference type="ChEBI" id="CHEBI:30616"/>
    </ligand>
</feature>
<feature type="binding site" evidence="2">
    <location>
        <position position="41"/>
    </location>
    <ligand>
        <name>ATP</name>
        <dbReference type="ChEBI" id="CHEBI:30616"/>
    </ligand>
</feature>
<gene>
    <name evidence="7" type="primary">ATG1</name>
    <name evidence="6" type="synonym">PDD7</name>
</gene>
<comment type="function">
    <text evidence="1 5">Serine/threonine protein kinase involved in the cytoplasm to vacuole transport (Cvt) and found to be essential in autophagy, where it is required for the formation of autophagosomes (PubMed:12702243). Involved in the clearance of protein aggregates which cannot be efficiently cleared by the proteasome. Required for selective autophagic degradation of the nucleus (nucleophagy) as well as for mitophagy which contributes to regulate mitochondrial quantity and quality by eliminating the mitochondria to a basal level to fulfill cellular energy requirements and preventing excess ROS production. Also involved in endoplasmic reticulum-specific autophagic process, in selective removal of ER-associated degradation (ERAD) substrates. Plays a key role in ATG9 and ATG23 cycling through the pre-autophagosomal structure and is necessary to promote ATG18 binding to ATG9 through phosphorylation of ATG9. Catalyzes phosphorylation of ATG4, decreasing the interaction between ATG4 and ATG8 and impairing deconjugation of PE-conjugated forms of ATG8 (By similarity).</text>
</comment>
<comment type="catalytic activity">
    <reaction evidence="1">
        <text>L-seryl-[protein] + ATP = O-phospho-L-seryl-[protein] + ADP + H(+)</text>
        <dbReference type="Rhea" id="RHEA:17989"/>
        <dbReference type="Rhea" id="RHEA-COMP:9863"/>
        <dbReference type="Rhea" id="RHEA-COMP:11604"/>
        <dbReference type="ChEBI" id="CHEBI:15378"/>
        <dbReference type="ChEBI" id="CHEBI:29999"/>
        <dbReference type="ChEBI" id="CHEBI:30616"/>
        <dbReference type="ChEBI" id="CHEBI:83421"/>
        <dbReference type="ChEBI" id="CHEBI:456216"/>
        <dbReference type="EC" id="2.7.11.1"/>
    </reaction>
</comment>
<comment type="catalytic activity">
    <reaction evidence="1">
        <text>L-threonyl-[protein] + ATP = O-phospho-L-threonyl-[protein] + ADP + H(+)</text>
        <dbReference type="Rhea" id="RHEA:46608"/>
        <dbReference type="Rhea" id="RHEA-COMP:11060"/>
        <dbReference type="Rhea" id="RHEA-COMP:11605"/>
        <dbReference type="ChEBI" id="CHEBI:15378"/>
        <dbReference type="ChEBI" id="CHEBI:30013"/>
        <dbReference type="ChEBI" id="CHEBI:30616"/>
        <dbReference type="ChEBI" id="CHEBI:61977"/>
        <dbReference type="ChEBI" id="CHEBI:456216"/>
        <dbReference type="EC" id="2.7.11.1"/>
    </reaction>
</comment>
<comment type="subunit">
    <text evidence="1">Homodimer. Forms a ternary complex with ATG13 and ATG17.</text>
</comment>
<comment type="subcellular location">
    <subcellularLocation>
        <location evidence="1">Cytoplasm</location>
    </subcellularLocation>
    <subcellularLocation>
        <location evidence="1">Preautophagosomal structure membrane</location>
        <topology evidence="1">Peripheral membrane protein</topology>
    </subcellularLocation>
</comment>
<comment type="similarity">
    <text evidence="2">Belongs to the protein kinase superfamily. Ser/Thr protein kinase family. APG1/unc-51/ULK1 subfamily.</text>
</comment>
<sequence>MSKHQTQVVGDFTIGPEIGRGSFANVYKGYDNRTKAPVAVKSVFRSRLKNQKLVENLEIEISILKNLKNPHIVALLDCVKTDQYFHLFMEYCSLGDLSYFIRRRDQLVQTHPLISSILERYPSPPNSHGLNKVLVVNFLKQLASALEFLRDQNLVHRDIKPQNLLLSPPVHSKEEFKRKGYSGLWELPVLKIADFGFARFLPSTSMAETLCGSPLYMAPEILRYEKYNAKADLWSVGAVIYEMSVGKPPFRASNHVELLRKIEKSKDEITFPVSAEVPDDLVRLICGLLKANPTERMGFQEFFNDPLIVYDVQCADEPLECSNVDEQLFISEYLPNLKTSPPAKPAPETIKEESEEEERAERAPTDSLLIGKEADLRIPRPMEGSGKDEVIKKLINKSSPPPDTVKDGQIKKGARRDKDDFVYEKDYVVVEKRTVEVNAIADELAKAGAGAVAIPSPHLGTNEHSAANPSGPTETQTQRRFSPSSRTSSIGSNRRPSWGDRKMPISISPTNALTKALGYTSNRLFGQQQQQPQQAQQAAIESAITNVTTNLLATKTLRPLKPSQETSLEDTEVINQLELLATMAHAISLFAEVKFSQLIPLPPSSSSPGSADYDEMYQNDAFPPQMVKSISSEGVALYVETLSLLAKAMSIASDWWHQNSSKPSTSPKLNDLVQWIRSRFNESLEKAEFLRLRLADANEQLVGESGSSLNKPVVAEKLIFDRALEMSRTAAMNELKNEDLLGCELSYSTAIWMLEALLSNDEEPVTGNEKLDAEDKKIIELFINSIGNRLKVLRQKIDKQGVRS</sequence>
<keyword id="KW-0067">ATP-binding</keyword>
<keyword id="KW-0072">Autophagy</keyword>
<keyword id="KW-0963">Cytoplasm</keyword>
<keyword id="KW-0418">Kinase</keyword>
<keyword id="KW-0472">Membrane</keyword>
<keyword id="KW-0547">Nucleotide-binding</keyword>
<keyword id="KW-0653">Protein transport</keyword>
<keyword id="KW-0723">Serine/threonine-protein kinase</keyword>
<keyword id="KW-0808">Transferase</keyword>
<keyword id="KW-0813">Transport</keyword>
<evidence type="ECO:0000250" key="1">
    <source>
        <dbReference type="UniProtKB" id="P53104"/>
    </source>
</evidence>
<evidence type="ECO:0000255" key="2">
    <source>
        <dbReference type="PROSITE-ProRule" id="PRU00159"/>
    </source>
</evidence>
<evidence type="ECO:0000255" key="3">
    <source>
        <dbReference type="PROSITE-ProRule" id="PRU10027"/>
    </source>
</evidence>
<evidence type="ECO:0000256" key="4">
    <source>
        <dbReference type="SAM" id="MobiDB-lite"/>
    </source>
</evidence>
<evidence type="ECO:0000269" key="5">
    <source>
    </source>
</evidence>
<evidence type="ECO:0000303" key="6">
    <source>
    </source>
</evidence>
<evidence type="ECO:0000303" key="7">
    <source>
    </source>
</evidence>
<protein>
    <recommendedName>
        <fullName evidence="1">Serine/threonine-protein kinase ATG1</fullName>
        <ecNumber evidence="1">2.7.11.1</ecNumber>
    </recommendedName>
    <alternativeName>
        <fullName evidence="1">Autophagy-related protein 1</fullName>
    </alternativeName>
    <alternativeName>
        <fullName evidence="6">Peroxisome degradation deficient protein 7</fullName>
    </alternativeName>
</protein>
<dbReference type="EC" id="2.7.11.1" evidence="1"/>
<dbReference type="EMBL" id="AY053423">
    <property type="protein sequence ID" value="AAL23618.1"/>
    <property type="molecule type" value="Genomic_DNA"/>
</dbReference>
<dbReference type="SMR" id="Q8TFN2"/>
<dbReference type="PhylomeDB" id="Q8TFN2"/>
<dbReference type="GO" id="GO:0005776">
    <property type="term" value="C:autophagosome"/>
    <property type="evidence" value="ECO:0007669"/>
    <property type="project" value="TreeGrafter"/>
</dbReference>
<dbReference type="GO" id="GO:0005829">
    <property type="term" value="C:cytosol"/>
    <property type="evidence" value="ECO:0007669"/>
    <property type="project" value="TreeGrafter"/>
</dbReference>
<dbReference type="GO" id="GO:0034045">
    <property type="term" value="C:phagophore assembly site membrane"/>
    <property type="evidence" value="ECO:0007669"/>
    <property type="project" value="UniProtKB-SubCell"/>
</dbReference>
<dbReference type="GO" id="GO:0005524">
    <property type="term" value="F:ATP binding"/>
    <property type="evidence" value="ECO:0007669"/>
    <property type="project" value="UniProtKB-KW"/>
</dbReference>
<dbReference type="GO" id="GO:0106310">
    <property type="term" value="F:protein serine kinase activity"/>
    <property type="evidence" value="ECO:0007669"/>
    <property type="project" value="RHEA"/>
</dbReference>
<dbReference type="GO" id="GO:0004674">
    <property type="term" value="F:protein serine/threonine kinase activity"/>
    <property type="evidence" value="ECO:0007669"/>
    <property type="project" value="UniProtKB-KW"/>
</dbReference>
<dbReference type="GO" id="GO:0000045">
    <property type="term" value="P:autophagosome assembly"/>
    <property type="evidence" value="ECO:0007669"/>
    <property type="project" value="TreeGrafter"/>
</dbReference>
<dbReference type="GO" id="GO:0000422">
    <property type="term" value="P:autophagy of mitochondrion"/>
    <property type="evidence" value="ECO:0007669"/>
    <property type="project" value="TreeGrafter"/>
</dbReference>
<dbReference type="GO" id="GO:0030447">
    <property type="term" value="P:filamentous growth"/>
    <property type="evidence" value="ECO:0007669"/>
    <property type="project" value="UniProtKB-ARBA"/>
</dbReference>
<dbReference type="GO" id="GO:0034727">
    <property type="term" value="P:piecemeal microautophagy of the nucleus"/>
    <property type="evidence" value="ECO:0007669"/>
    <property type="project" value="TreeGrafter"/>
</dbReference>
<dbReference type="GO" id="GO:0015031">
    <property type="term" value="P:protein transport"/>
    <property type="evidence" value="ECO:0007669"/>
    <property type="project" value="UniProtKB-KW"/>
</dbReference>
<dbReference type="GO" id="GO:0010506">
    <property type="term" value="P:regulation of autophagy"/>
    <property type="evidence" value="ECO:0007669"/>
    <property type="project" value="InterPro"/>
</dbReference>
<dbReference type="GO" id="GO:0042594">
    <property type="term" value="P:response to starvation"/>
    <property type="evidence" value="ECO:0007669"/>
    <property type="project" value="TreeGrafter"/>
</dbReference>
<dbReference type="GO" id="GO:0061709">
    <property type="term" value="P:reticulophagy"/>
    <property type="evidence" value="ECO:0007669"/>
    <property type="project" value="TreeGrafter"/>
</dbReference>
<dbReference type="CDD" id="cd14009">
    <property type="entry name" value="STKc_ATG1_ULK_like"/>
    <property type="match status" value="1"/>
</dbReference>
<dbReference type="FunFam" id="3.30.200.20:FF:000042">
    <property type="entry name" value="Aurora kinase A"/>
    <property type="match status" value="1"/>
</dbReference>
<dbReference type="FunFam" id="1.10.510.10:FF:000817">
    <property type="entry name" value="Serine/threonine-protein kinase ATG1"/>
    <property type="match status" value="1"/>
</dbReference>
<dbReference type="Gene3D" id="1.10.510.10">
    <property type="entry name" value="Transferase(Phosphotransferase) domain 1"/>
    <property type="match status" value="1"/>
</dbReference>
<dbReference type="InterPro" id="IPR045269">
    <property type="entry name" value="Atg1-like"/>
</dbReference>
<dbReference type="InterPro" id="IPR048941">
    <property type="entry name" value="ATG1-like_MIT2"/>
</dbReference>
<dbReference type="InterPro" id="IPR022708">
    <property type="entry name" value="Atg1-like_tMIT"/>
</dbReference>
<dbReference type="InterPro" id="IPR011009">
    <property type="entry name" value="Kinase-like_dom_sf"/>
</dbReference>
<dbReference type="InterPro" id="IPR000719">
    <property type="entry name" value="Prot_kinase_dom"/>
</dbReference>
<dbReference type="InterPro" id="IPR017441">
    <property type="entry name" value="Protein_kinase_ATP_BS"/>
</dbReference>
<dbReference type="InterPro" id="IPR008271">
    <property type="entry name" value="Ser/Thr_kinase_AS"/>
</dbReference>
<dbReference type="PANTHER" id="PTHR24348:SF22">
    <property type="entry name" value="NON-SPECIFIC SERINE_THREONINE PROTEIN KINASE"/>
    <property type="match status" value="1"/>
</dbReference>
<dbReference type="PANTHER" id="PTHR24348">
    <property type="entry name" value="SERINE/THREONINE-PROTEIN KINASE UNC-51-RELATED"/>
    <property type="match status" value="1"/>
</dbReference>
<dbReference type="Pfam" id="PF12063">
    <property type="entry name" value="ATG1-like_MIT1"/>
    <property type="match status" value="1"/>
</dbReference>
<dbReference type="Pfam" id="PF21127">
    <property type="entry name" value="ATG1-like_MIT2"/>
    <property type="match status" value="1"/>
</dbReference>
<dbReference type="Pfam" id="PF00069">
    <property type="entry name" value="Pkinase"/>
    <property type="match status" value="1"/>
</dbReference>
<dbReference type="SMART" id="SM00220">
    <property type="entry name" value="S_TKc"/>
    <property type="match status" value="1"/>
</dbReference>
<dbReference type="SUPFAM" id="SSF56112">
    <property type="entry name" value="Protein kinase-like (PK-like)"/>
    <property type="match status" value="1"/>
</dbReference>
<dbReference type="PROSITE" id="PS00107">
    <property type="entry name" value="PROTEIN_KINASE_ATP"/>
    <property type="match status" value="1"/>
</dbReference>
<dbReference type="PROSITE" id="PS50011">
    <property type="entry name" value="PROTEIN_KINASE_DOM"/>
    <property type="match status" value="1"/>
</dbReference>
<dbReference type="PROSITE" id="PS00108">
    <property type="entry name" value="PROTEIN_KINASE_ST"/>
    <property type="match status" value="1"/>
</dbReference>
<organism>
    <name type="scientific">Pichia angusta</name>
    <name type="common">Yeast</name>
    <name type="synonym">Hansenula polymorpha</name>
    <dbReference type="NCBI Taxonomy" id="870730"/>
    <lineage>
        <taxon>Eukaryota</taxon>
        <taxon>Fungi</taxon>
        <taxon>Dikarya</taxon>
        <taxon>Ascomycota</taxon>
        <taxon>Saccharomycotina</taxon>
        <taxon>Pichiomycetes</taxon>
        <taxon>Pichiales</taxon>
        <taxon>Pichiaceae</taxon>
        <taxon>Ogataea</taxon>
    </lineage>
</organism>
<accession>Q8TFN2</accession>
<proteinExistence type="inferred from homology"/>
<reference key="1">
    <citation type="journal article" date="2003" name="FEMS Yeast Res.">
        <title>The Hansenula polymorpha PDD7 gene is essential for micropexophagy and microautophagy.</title>
        <authorList>
            <person name="Komduur J.A."/>
            <person name="Veenhuis M."/>
            <person name="Kiel J.A.K.W."/>
        </authorList>
    </citation>
    <scope>NUCLEOTIDE SEQUENCE [GENOMIC DNA]</scope>
    <scope>FUNCTION</scope>
    <source>
        <strain>ATCC 34438 / CBS 4732 / DSM 70277 / JCM 3621 / NBRC 1476 / NRRL Y-5445</strain>
    </source>
</reference>
<reference key="2">
    <citation type="journal article" date="2003" name="Dev. Cell">
        <title>A unified nomenclature for yeast autophagy-related genes.</title>
        <authorList>
            <person name="Klionsky D.J."/>
            <person name="Cregg J.M."/>
            <person name="Dunn W.A. Jr."/>
            <person name="Emr S.D."/>
            <person name="Sakai Y."/>
            <person name="Sandoval I.V."/>
            <person name="Sibirny A."/>
            <person name="Subramani S."/>
            <person name="Thumm M."/>
            <person name="Veenhuis M."/>
            <person name="Ohsumi Y."/>
        </authorList>
    </citation>
    <scope>NOMENCLATURE</scope>
</reference>
<name>ATG1_PICAN</name>